<name>Y3860_BREBN</name>
<dbReference type="EC" id="2.3.1.-" evidence="1"/>
<dbReference type="EMBL" id="AP008955">
    <property type="protein sequence ID" value="BAH44837.1"/>
    <property type="molecule type" value="Genomic_DNA"/>
</dbReference>
<dbReference type="RefSeq" id="WP_015892118.1">
    <property type="nucleotide sequence ID" value="NC_012491.1"/>
</dbReference>
<dbReference type="SMR" id="C0ZGC8"/>
<dbReference type="STRING" id="358681.BBR47_38600"/>
<dbReference type="KEGG" id="bbe:BBR47_38600"/>
<dbReference type="eggNOG" id="COG0454">
    <property type="taxonomic scope" value="Bacteria"/>
</dbReference>
<dbReference type="HOGENOM" id="CLU_136634_0_0_9"/>
<dbReference type="Proteomes" id="UP000001877">
    <property type="component" value="Chromosome"/>
</dbReference>
<dbReference type="GO" id="GO:0016747">
    <property type="term" value="F:acyltransferase activity, transferring groups other than amino-acyl groups"/>
    <property type="evidence" value="ECO:0007669"/>
    <property type="project" value="UniProtKB-UniRule"/>
</dbReference>
<dbReference type="CDD" id="cd04301">
    <property type="entry name" value="NAT_SF"/>
    <property type="match status" value="1"/>
</dbReference>
<dbReference type="Gene3D" id="3.40.630.30">
    <property type="match status" value="1"/>
</dbReference>
<dbReference type="HAMAP" id="MF_00824">
    <property type="entry name" value="Acetyltransf_YlbP"/>
    <property type="match status" value="1"/>
</dbReference>
<dbReference type="InterPro" id="IPR016181">
    <property type="entry name" value="Acyl_CoA_acyltransferase"/>
</dbReference>
<dbReference type="InterPro" id="IPR000182">
    <property type="entry name" value="GNAT_dom"/>
</dbReference>
<dbReference type="InterPro" id="IPR017274">
    <property type="entry name" value="YlbP"/>
</dbReference>
<dbReference type="NCBIfam" id="NF010241">
    <property type="entry name" value="PRK13688.1"/>
    <property type="match status" value="1"/>
</dbReference>
<dbReference type="Pfam" id="PF00583">
    <property type="entry name" value="Acetyltransf_1"/>
    <property type="match status" value="1"/>
</dbReference>
<dbReference type="PIRSF" id="PIRSF037732">
    <property type="entry name" value="YlbP_prd"/>
    <property type="match status" value="1"/>
</dbReference>
<dbReference type="SUPFAM" id="SSF55729">
    <property type="entry name" value="Acyl-CoA N-acyltransferases (Nat)"/>
    <property type="match status" value="1"/>
</dbReference>
<dbReference type="PROSITE" id="PS51186">
    <property type="entry name" value="GNAT"/>
    <property type="match status" value="1"/>
</dbReference>
<gene>
    <name type="ordered locus">BBR47_38600</name>
</gene>
<protein>
    <recommendedName>
        <fullName evidence="1">Uncharacterized N-acetyltransferase BBR47_38600</fullName>
        <ecNumber evidence="1">2.3.1.-</ecNumber>
    </recommendedName>
</protein>
<sequence length="155" mass="18561">MFEVRRLQINYKTLEEFQKFREFGLEELSMKEDLEANIVENDSESPFYGIYDNDLLVARMSLYKIDGKYDRYFQPAQDYYELWKLEVLPDYRSKDYGTALVNHAKSFGAPIKTNSRCRADDFWLKMGFTPVKYNLMRDRGENPYVWLPESVELQD</sequence>
<reference key="1">
    <citation type="submission" date="2005-03" db="EMBL/GenBank/DDBJ databases">
        <title>Brevibacillus brevis strain 47, complete genome.</title>
        <authorList>
            <person name="Hosoyama A."/>
            <person name="Yamada R."/>
            <person name="Hongo Y."/>
            <person name="Terui Y."/>
            <person name="Ankai A."/>
            <person name="Masuyama W."/>
            <person name="Sekiguchi M."/>
            <person name="Takeda T."/>
            <person name="Asano K."/>
            <person name="Ohji S."/>
            <person name="Ichikawa N."/>
            <person name="Narita S."/>
            <person name="Aoki N."/>
            <person name="Miura H."/>
            <person name="Matsushita S."/>
            <person name="Sekigawa T."/>
            <person name="Yamagata H."/>
            <person name="Yoshikawa H."/>
            <person name="Udaka S."/>
            <person name="Tanikawa S."/>
            <person name="Fujita N."/>
        </authorList>
    </citation>
    <scope>NUCLEOTIDE SEQUENCE [LARGE SCALE GENOMIC DNA]</scope>
    <source>
        <strain>47 / JCM 6285 / NBRC 100599</strain>
    </source>
</reference>
<accession>C0ZGC8</accession>
<evidence type="ECO:0000255" key="1">
    <source>
        <dbReference type="HAMAP-Rule" id="MF_00824"/>
    </source>
</evidence>
<feature type="chain" id="PRO_1000148765" description="Uncharacterized N-acetyltransferase BBR47_38600">
    <location>
        <begin position="1"/>
        <end position="155"/>
    </location>
</feature>
<feature type="domain" description="N-acetyltransferase" evidence="1">
    <location>
        <begin position="7"/>
        <end position="154"/>
    </location>
</feature>
<proteinExistence type="inferred from homology"/>
<organism>
    <name type="scientific">Brevibacillus brevis (strain 47 / JCM 6285 / NBRC 100599)</name>
    <dbReference type="NCBI Taxonomy" id="358681"/>
    <lineage>
        <taxon>Bacteria</taxon>
        <taxon>Bacillati</taxon>
        <taxon>Bacillota</taxon>
        <taxon>Bacilli</taxon>
        <taxon>Bacillales</taxon>
        <taxon>Paenibacillaceae</taxon>
        <taxon>Brevibacillus</taxon>
    </lineage>
</organism>
<keyword id="KW-0012">Acyltransferase</keyword>
<keyword id="KW-1185">Reference proteome</keyword>
<keyword id="KW-0808">Transferase</keyword>